<feature type="chain" id="PRO_1000075281" description="Heat-inducible transcription repressor HrcA">
    <location>
        <begin position="1"/>
        <end position="356"/>
    </location>
</feature>
<gene>
    <name evidence="1" type="primary">hrcA</name>
    <name type="ordered locus">BCAN_A0177</name>
</gene>
<organism>
    <name type="scientific">Brucella canis (strain ATCC 23365 / NCTC 10854 / RM-666)</name>
    <dbReference type="NCBI Taxonomy" id="483179"/>
    <lineage>
        <taxon>Bacteria</taxon>
        <taxon>Pseudomonadati</taxon>
        <taxon>Pseudomonadota</taxon>
        <taxon>Alphaproteobacteria</taxon>
        <taxon>Hyphomicrobiales</taxon>
        <taxon>Brucellaceae</taxon>
        <taxon>Brucella/Ochrobactrum group</taxon>
        <taxon>Brucella</taxon>
    </lineage>
</organism>
<sequence>MMRPPEHQLLSSLDQRSRDIFRLIVETYLNDGDPVGSRNLSRLLPHTLSPATIRNVMSDLEHLGLIYAPHISAGRLPTQIGLRFFVDAFLEVGDLPPEERSSIEAQVRAAGTSNSVESVLTEASQVLSGLSRGAGLVLTNKTDVALKHIEFVRLEPMRALAVLVMQNGDVENRVIDLPAGISTSQLIEASNFLNAHIHGHTLSEAKSELRKLSEETRRELDQLSQELVAKGLAVWSGAGADQPARLIVRGRANLLENVHAQEDIERLRHLFDDLETKDGMVQLLDLAEAGSGVRIFIGSENKLFSLSGSSLVVAPYRDSEQRVIGALGVIGPTRLNYARIVPMVDYTAQIVSRLLR</sequence>
<accession>A9M7B7</accession>
<protein>
    <recommendedName>
        <fullName evidence="1">Heat-inducible transcription repressor HrcA</fullName>
    </recommendedName>
</protein>
<evidence type="ECO:0000255" key="1">
    <source>
        <dbReference type="HAMAP-Rule" id="MF_00081"/>
    </source>
</evidence>
<proteinExistence type="inferred from homology"/>
<reference key="1">
    <citation type="submission" date="2007-10" db="EMBL/GenBank/DDBJ databases">
        <title>Brucella canis ATCC 23365 whole genome shotgun sequencing project.</title>
        <authorList>
            <person name="Setubal J.C."/>
            <person name="Bowns C."/>
            <person name="Boyle S."/>
            <person name="Crasta O.R."/>
            <person name="Czar M.J."/>
            <person name="Dharmanolla C."/>
            <person name="Gillespie J.J."/>
            <person name="Kenyon R.W."/>
            <person name="Lu J."/>
            <person name="Mane S."/>
            <person name="Mohapatra S."/>
            <person name="Nagrani S."/>
            <person name="Purkayastha A."/>
            <person name="Rajasimha H.K."/>
            <person name="Shallom J.M."/>
            <person name="Shallom S."/>
            <person name="Shukla M."/>
            <person name="Snyder E.E."/>
            <person name="Sobral B.W."/>
            <person name="Wattam A.R."/>
            <person name="Will R."/>
            <person name="Williams K."/>
            <person name="Yoo H."/>
            <person name="Bruce D."/>
            <person name="Detter C."/>
            <person name="Munk C."/>
            <person name="Brettin T.S."/>
        </authorList>
    </citation>
    <scope>NUCLEOTIDE SEQUENCE [LARGE SCALE GENOMIC DNA]</scope>
    <source>
        <strain>ATCC 23365 / NCTC 10854 / RM-666</strain>
    </source>
</reference>
<keyword id="KW-1185">Reference proteome</keyword>
<keyword id="KW-0678">Repressor</keyword>
<keyword id="KW-0346">Stress response</keyword>
<keyword id="KW-0804">Transcription</keyword>
<keyword id="KW-0805">Transcription regulation</keyword>
<comment type="function">
    <text evidence="1">Negative regulator of class I heat shock genes (grpE-dnaK-dnaJ and groELS operons). Prevents heat-shock induction of these operons.</text>
</comment>
<comment type="similarity">
    <text evidence="1">Belongs to the HrcA family.</text>
</comment>
<dbReference type="EMBL" id="CP000872">
    <property type="protein sequence ID" value="ABX61276.1"/>
    <property type="molecule type" value="Genomic_DNA"/>
</dbReference>
<dbReference type="RefSeq" id="WP_002965420.1">
    <property type="nucleotide sequence ID" value="NC_010103.1"/>
</dbReference>
<dbReference type="SMR" id="A9M7B7"/>
<dbReference type="GeneID" id="93017361"/>
<dbReference type="KEGG" id="bcs:BCAN_A0177"/>
<dbReference type="HOGENOM" id="CLU_050019_0_0_5"/>
<dbReference type="PhylomeDB" id="A9M7B7"/>
<dbReference type="Proteomes" id="UP000001385">
    <property type="component" value="Chromosome I"/>
</dbReference>
<dbReference type="GO" id="GO:0003677">
    <property type="term" value="F:DNA binding"/>
    <property type="evidence" value="ECO:0007669"/>
    <property type="project" value="InterPro"/>
</dbReference>
<dbReference type="GO" id="GO:0045892">
    <property type="term" value="P:negative regulation of DNA-templated transcription"/>
    <property type="evidence" value="ECO:0007669"/>
    <property type="project" value="UniProtKB-UniRule"/>
</dbReference>
<dbReference type="Gene3D" id="3.30.450.40">
    <property type="match status" value="1"/>
</dbReference>
<dbReference type="Gene3D" id="3.30.390.60">
    <property type="entry name" value="Heat-inducible transcription repressor hrca homolog, domain 3"/>
    <property type="match status" value="1"/>
</dbReference>
<dbReference type="Gene3D" id="1.10.10.10">
    <property type="entry name" value="Winged helix-like DNA-binding domain superfamily/Winged helix DNA-binding domain"/>
    <property type="match status" value="1"/>
</dbReference>
<dbReference type="HAMAP" id="MF_00081">
    <property type="entry name" value="HrcA"/>
    <property type="match status" value="1"/>
</dbReference>
<dbReference type="InterPro" id="IPR029016">
    <property type="entry name" value="GAF-like_dom_sf"/>
</dbReference>
<dbReference type="InterPro" id="IPR002571">
    <property type="entry name" value="HrcA"/>
</dbReference>
<dbReference type="InterPro" id="IPR021153">
    <property type="entry name" value="HrcA_C"/>
</dbReference>
<dbReference type="InterPro" id="IPR036388">
    <property type="entry name" value="WH-like_DNA-bd_sf"/>
</dbReference>
<dbReference type="InterPro" id="IPR036390">
    <property type="entry name" value="WH_DNA-bd_sf"/>
</dbReference>
<dbReference type="InterPro" id="IPR023120">
    <property type="entry name" value="WHTH_transcript_rep_HrcA_IDD"/>
</dbReference>
<dbReference type="NCBIfam" id="TIGR00331">
    <property type="entry name" value="hrcA"/>
    <property type="match status" value="1"/>
</dbReference>
<dbReference type="PANTHER" id="PTHR34824">
    <property type="entry name" value="HEAT-INDUCIBLE TRANSCRIPTION REPRESSOR HRCA"/>
    <property type="match status" value="1"/>
</dbReference>
<dbReference type="PANTHER" id="PTHR34824:SF1">
    <property type="entry name" value="HEAT-INDUCIBLE TRANSCRIPTION REPRESSOR HRCA"/>
    <property type="match status" value="1"/>
</dbReference>
<dbReference type="Pfam" id="PF01628">
    <property type="entry name" value="HrcA"/>
    <property type="match status" value="1"/>
</dbReference>
<dbReference type="PIRSF" id="PIRSF005485">
    <property type="entry name" value="HrcA"/>
    <property type="match status" value="1"/>
</dbReference>
<dbReference type="SUPFAM" id="SSF55781">
    <property type="entry name" value="GAF domain-like"/>
    <property type="match status" value="1"/>
</dbReference>
<dbReference type="SUPFAM" id="SSF46785">
    <property type="entry name" value="Winged helix' DNA-binding domain"/>
    <property type="match status" value="1"/>
</dbReference>
<name>HRCA_BRUC2</name>